<feature type="chain" id="PRO_0000145054" description="Carbamoyl phosphate synthase large chain">
    <location>
        <begin position="1"/>
        <end position="1058"/>
    </location>
</feature>
<feature type="domain" description="ATP-grasp 1" evidence="1">
    <location>
        <begin position="133"/>
        <end position="327"/>
    </location>
</feature>
<feature type="domain" description="ATP-grasp 2" evidence="1">
    <location>
        <begin position="671"/>
        <end position="861"/>
    </location>
</feature>
<feature type="domain" description="MGS-like" evidence="1">
    <location>
        <begin position="930"/>
        <end position="1058"/>
    </location>
</feature>
<feature type="region of interest" description="Carboxyphosphate synthetic domain" evidence="1">
    <location>
        <begin position="1"/>
        <end position="401"/>
    </location>
</feature>
<feature type="region of interest" description="Oligomerization domain" evidence="1">
    <location>
        <begin position="402"/>
        <end position="546"/>
    </location>
</feature>
<feature type="region of interest" description="Carbamoyl phosphate synthetic domain" evidence="1">
    <location>
        <begin position="547"/>
        <end position="929"/>
    </location>
</feature>
<feature type="region of interest" description="Allosteric domain" evidence="1">
    <location>
        <begin position="930"/>
        <end position="1058"/>
    </location>
</feature>
<feature type="binding site" evidence="1">
    <location>
        <position position="129"/>
    </location>
    <ligand>
        <name>ATP</name>
        <dbReference type="ChEBI" id="CHEBI:30616"/>
        <label>1</label>
    </ligand>
</feature>
<feature type="binding site" evidence="1">
    <location>
        <position position="169"/>
    </location>
    <ligand>
        <name>ATP</name>
        <dbReference type="ChEBI" id="CHEBI:30616"/>
        <label>1</label>
    </ligand>
</feature>
<feature type="binding site" evidence="1">
    <location>
        <position position="175"/>
    </location>
    <ligand>
        <name>ATP</name>
        <dbReference type="ChEBI" id="CHEBI:30616"/>
        <label>1</label>
    </ligand>
</feature>
<feature type="binding site" evidence="1">
    <location>
        <position position="176"/>
    </location>
    <ligand>
        <name>ATP</name>
        <dbReference type="ChEBI" id="CHEBI:30616"/>
        <label>1</label>
    </ligand>
</feature>
<feature type="binding site" evidence="1">
    <location>
        <position position="208"/>
    </location>
    <ligand>
        <name>ATP</name>
        <dbReference type="ChEBI" id="CHEBI:30616"/>
        <label>1</label>
    </ligand>
</feature>
<feature type="binding site" evidence="1">
    <location>
        <position position="210"/>
    </location>
    <ligand>
        <name>ATP</name>
        <dbReference type="ChEBI" id="CHEBI:30616"/>
        <label>1</label>
    </ligand>
</feature>
<feature type="binding site" evidence="1">
    <location>
        <position position="215"/>
    </location>
    <ligand>
        <name>ATP</name>
        <dbReference type="ChEBI" id="CHEBI:30616"/>
        <label>1</label>
    </ligand>
</feature>
<feature type="binding site" evidence="1">
    <location>
        <position position="241"/>
    </location>
    <ligand>
        <name>ATP</name>
        <dbReference type="ChEBI" id="CHEBI:30616"/>
        <label>1</label>
    </ligand>
</feature>
<feature type="binding site" evidence="1">
    <location>
        <position position="242"/>
    </location>
    <ligand>
        <name>ATP</name>
        <dbReference type="ChEBI" id="CHEBI:30616"/>
        <label>1</label>
    </ligand>
</feature>
<feature type="binding site" evidence="1">
    <location>
        <position position="243"/>
    </location>
    <ligand>
        <name>ATP</name>
        <dbReference type="ChEBI" id="CHEBI:30616"/>
        <label>1</label>
    </ligand>
</feature>
<feature type="binding site" evidence="1">
    <location>
        <position position="284"/>
    </location>
    <ligand>
        <name>ATP</name>
        <dbReference type="ChEBI" id="CHEBI:30616"/>
        <label>1</label>
    </ligand>
</feature>
<feature type="binding site" evidence="1">
    <location>
        <position position="284"/>
    </location>
    <ligand>
        <name>Mg(2+)</name>
        <dbReference type="ChEBI" id="CHEBI:18420"/>
        <label>1</label>
    </ligand>
</feature>
<feature type="binding site" evidence="1">
    <location>
        <position position="284"/>
    </location>
    <ligand>
        <name>Mn(2+)</name>
        <dbReference type="ChEBI" id="CHEBI:29035"/>
        <label>1</label>
    </ligand>
</feature>
<feature type="binding site" evidence="1">
    <location>
        <position position="298"/>
    </location>
    <ligand>
        <name>ATP</name>
        <dbReference type="ChEBI" id="CHEBI:30616"/>
        <label>1</label>
    </ligand>
</feature>
<feature type="binding site" evidence="1">
    <location>
        <position position="298"/>
    </location>
    <ligand>
        <name>Mg(2+)</name>
        <dbReference type="ChEBI" id="CHEBI:18420"/>
        <label>1</label>
    </ligand>
</feature>
<feature type="binding site" evidence="1">
    <location>
        <position position="298"/>
    </location>
    <ligand>
        <name>Mg(2+)</name>
        <dbReference type="ChEBI" id="CHEBI:18420"/>
        <label>2</label>
    </ligand>
</feature>
<feature type="binding site" evidence="1">
    <location>
        <position position="298"/>
    </location>
    <ligand>
        <name>Mn(2+)</name>
        <dbReference type="ChEBI" id="CHEBI:29035"/>
        <label>1</label>
    </ligand>
</feature>
<feature type="binding site" evidence="1">
    <location>
        <position position="298"/>
    </location>
    <ligand>
        <name>Mn(2+)</name>
        <dbReference type="ChEBI" id="CHEBI:29035"/>
        <label>2</label>
    </ligand>
</feature>
<feature type="binding site" evidence="1">
    <location>
        <position position="300"/>
    </location>
    <ligand>
        <name>Mg(2+)</name>
        <dbReference type="ChEBI" id="CHEBI:18420"/>
        <label>2</label>
    </ligand>
</feature>
<feature type="binding site" evidence="1">
    <location>
        <position position="300"/>
    </location>
    <ligand>
        <name>Mn(2+)</name>
        <dbReference type="ChEBI" id="CHEBI:29035"/>
        <label>2</label>
    </ligand>
</feature>
<feature type="binding site" evidence="1">
    <location>
        <position position="707"/>
    </location>
    <ligand>
        <name>ATP</name>
        <dbReference type="ChEBI" id="CHEBI:30616"/>
        <label>2</label>
    </ligand>
</feature>
<feature type="binding site" evidence="1">
    <location>
        <position position="746"/>
    </location>
    <ligand>
        <name>ATP</name>
        <dbReference type="ChEBI" id="CHEBI:30616"/>
        <label>2</label>
    </ligand>
</feature>
<feature type="binding site" evidence="1">
    <location>
        <position position="748"/>
    </location>
    <ligand>
        <name>ATP</name>
        <dbReference type="ChEBI" id="CHEBI:30616"/>
        <label>2</label>
    </ligand>
</feature>
<feature type="binding site" evidence="1">
    <location>
        <position position="752"/>
    </location>
    <ligand>
        <name>ATP</name>
        <dbReference type="ChEBI" id="CHEBI:30616"/>
        <label>2</label>
    </ligand>
</feature>
<feature type="binding site" evidence="1">
    <location>
        <position position="777"/>
    </location>
    <ligand>
        <name>ATP</name>
        <dbReference type="ChEBI" id="CHEBI:30616"/>
        <label>2</label>
    </ligand>
</feature>
<feature type="binding site" evidence="1">
    <location>
        <position position="778"/>
    </location>
    <ligand>
        <name>ATP</name>
        <dbReference type="ChEBI" id="CHEBI:30616"/>
        <label>2</label>
    </ligand>
</feature>
<feature type="binding site" evidence="1">
    <location>
        <position position="779"/>
    </location>
    <ligand>
        <name>ATP</name>
        <dbReference type="ChEBI" id="CHEBI:30616"/>
        <label>2</label>
    </ligand>
</feature>
<feature type="binding site" evidence="1">
    <location>
        <position position="780"/>
    </location>
    <ligand>
        <name>ATP</name>
        <dbReference type="ChEBI" id="CHEBI:30616"/>
        <label>2</label>
    </ligand>
</feature>
<feature type="binding site" evidence="1">
    <location>
        <position position="820"/>
    </location>
    <ligand>
        <name>ATP</name>
        <dbReference type="ChEBI" id="CHEBI:30616"/>
        <label>2</label>
    </ligand>
</feature>
<feature type="binding site" evidence="1">
    <location>
        <position position="820"/>
    </location>
    <ligand>
        <name>Mg(2+)</name>
        <dbReference type="ChEBI" id="CHEBI:18420"/>
        <label>3</label>
    </ligand>
</feature>
<feature type="binding site" evidence="1">
    <location>
        <position position="820"/>
    </location>
    <ligand>
        <name>Mn(2+)</name>
        <dbReference type="ChEBI" id="CHEBI:29035"/>
        <label>3</label>
    </ligand>
</feature>
<feature type="binding site" evidence="1">
    <location>
        <position position="832"/>
    </location>
    <ligand>
        <name>ATP</name>
        <dbReference type="ChEBI" id="CHEBI:30616"/>
        <label>2</label>
    </ligand>
</feature>
<feature type="binding site" evidence="1">
    <location>
        <position position="832"/>
    </location>
    <ligand>
        <name>Mg(2+)</name>
        <dbReference type="ChEBI" id="CHEBI:18420"/>
        <label>3</label>
    </ligand>
</feature>
<feature type="binding site" evidence="1">
    <location>
        <position position="832"/>
    </location>
    <ligand>
        <name>Mg(2+)</name>
        <dbReference type="ChEBI" id="CHEBI:18420"/>
        <label>4</label>
    </ligand>
</feature>
<feature type="binding site" evidence="1">
    <location>
        <position position="832"/>
    </location>
    <ligand>
        <name>Mn(2+)</name>
        <dbReference type="ChEBI" id="CHEBI:29035"/>
        <label>3</label>
    </ligand>
</feature>
<feature type="binding site" evidence="1">
    <location>
        <position position="832"/>
    </location>
    <ligand>
        <name>Mn(2+)</name>
        <dbReference type="ChEBI" id="CHEBI:29035"/>
        <label>4</label>
    </ligand>
</feature>
<feature type="binding site" evidence="1">
    <location>
        <position position="834"/>
    </location>
    <ligand>
        <name>Mg(2+)</name>
        <dbReference type="ChEBI" id="CHEBI:18420"/>
        <label>4</label>
    </ligand>
</feature>
<feature type="binding site" evidence="1">
    <location>
        <position position="834"/>
    </location>
    <ligand>
        <name>Mn(2+)</name>
        <dbReference type="ChEBI" id="CHEBI:29035"/>
        <label>4</label>
    </ligand>
</feature>
<reference key="1">
    <citation type="journal article" date="2002" name="Proc. Natl. Acad. Sci. U.S.A.">
        <title>Genome sequence of a serotype M3 strain of group A Streptococcus: phage-encoded toxins, the high-virulence phenotype, and clone emergence.</title>
        <authorList>
            <person name="Beres S.B."/>
            <person name="Sylva G.L."/>
            <person name="Barbian K.D."/>
            <person name="Lei B."/>
            <person name="Hoff J.S."/>
            <person name="Mammarella N.D."/>
            <person name="Liu M.-Y."/>
            <person name="Smoot J.C."/>
            <person name="Porcella S.F."/>
            <person name="Parkins L.D."/>
            <person name="Campbell D.S."/>
            <person name="Smith T.M."/>
            <person name="McCormick J.K."/>
            <person name="Leung D.Y.M."/>
            <person name="Schlievert P.M."/>
            <person name="Musser J.M."/>
        </authorList>
    </citation>
    <scope>NUCLEOTIDE SEQUENCE [LARGE SCALE GENOMIC DNA]</scope>
    <source>
        <strain>ATCC BAA-595 / MGAS315</strain>
    </source>
</reference>
<protein>
    <recommendedName>
        <fullName evidence="1">Carbamoyl phosphate synthase large chain</fullName>
        <ecNumber evidence="1">6.3.4.16</ecNumber>
        <ecNumber evidence="1">6.3.5.5</ecNumber>
    </recommendedName>
    <alternativeName>
        <fullName evidence="1">Carbamoyl phosphate synthetase ammonia chain</fullName>
    </alternativeName>
</protein>
<keyword id="KW-0028">Amino-acid biosynthesis</keyword>
<keyword id="KW-0055">Arginine biosynthesis</keyword>
<keyword id="KW-0067">ATP-binding</keyword>
<keyword id="KW-0436">Ligase</keyword>
<keyword id="KW-0460">Magnesium</keyword>
<keyword id="KW-0464">Manganese</keyword>
<keyword id="KW-0479">Metal-binding</keyword>
<keyword id="KW-0547">Nucleotide-binding</keyword>
<keyword id="KW-0665">Pyrimidine biosynthesis</keyword>
<keyword id="KW-0677">Repeat</keyword>
<accession>P0DA14</accession>
<accession>Q8K7Y3</accession>
<sequence>MPKRKDIQKIMVIGSGPIIIGQAAEFDYAGTQACLALKEEGYKVILVNSNPATIMTDKEIADKVYIEPLTLEFVNRIIRKERPDAILPTLGGQTGLNMAMALSKAGILDDLEIELLGTKLSAIDQAEDRDLFKQLMQELDQPIPESTIVKTVDEAVTFARDIGYPVIVRPAFTLGGTGGGICSSEEELCEITENGLKLSPVTQCLIERSIAGFKEIEYEVMRDSADNALVVCNMENFDPVGIHTGDSIVFAPTQTLSDIENQMLRDASLKIIRALKIEGGCNVQLALDPYSFKYYVIEVNPRVSRSSALASKATGYPIAKLAAKIAVGLTLDEMINPITGTTYAMFEPALDYVVAKIPRFPFDKFEHGERQLGTQMKATGEVMAIGRNLEESLLKACRSLEIGVCHNEMTSLSNISDEELVTKVIKAQDDRLFYLSEAIRRGYSIEELESLTKIDLFFLDKLLHIVEIEQELQMHVDHLESLKKAKRYGFSDQKIAEIWQKDESDIRAMRHSHSLYPVYKMVDTCAAEFDAKTPYFYSTYELENESVQSNKESILVLGSGPIRIGQGVEFDYATVHSVKAIQKAGYEAIIMNSNPETVSTDFSVSDKLYFEPLTFEDVMNVIDLEQPKGVIVQFGGQTAINLAQALSEAGVTILGTQVEDLDRAEDRDLFEKALKELGIPQPQGQTATNEEEALEAAKKIGFPVLVRPSYVLGGRAMEIVENKEDLIEYIRTAVKASPEHPILVDSYIFGKECEVDAISDGKSVLIPGIMEHIERAGVHSGDSMAVYPPQQLSKQIQETIAEYTKRLAIGLNCIGMMNVQFVIKNEQVYVIEVNPRASRTVPFLSKVTGIPMAQIATKLILGQTLKDLGYEDGLYPQSQLVHIKAPVFSFTKLAQVDSLLGPEMKSTGEVMGSDTSLEKALYKAFEANNSHLSEFGQIVFTIADDSKAEALSLARRFKAIGYQIMATQGTAAYFAEQGLSACLVGKIGDAANDIPTLVRHGHVQAIVNTVGIKRTADKDGQMIRSSAIEQGVPLFTALDTAKAMLTVLESRCFNIEAI</sequence>
<dbReference type="EC" id="6.3.4.16" evidence="1"/>
<dbReference type="EC" id="6.3.5.5" evidence="1"/>
<dbReference type="EMBL" id="AE014074">
    <property type="protein sequence ID" value="AAM79169.1"/>
    <property type="status" value="ALT_INIT"/>
    <property type="molecule type" value="Genomic_DNA"/>
</dbReference>
<dbReference type="RefSeq" id="WP_011054357.1">
    <property type="nucleotide sequence ID" value="NC_004070.1"/>
</dbReference>
<dbReference type="SMR" id="P0DA14"/>
<dbReference type="KEGG" id="spg:SpyM3_0562"/>
<dbReference type="HOGENOM" id="CLU_000513_1_2_9"/>
<dbReference type="UniPathway" id="UPA00068">
    <property type="reaction ID" value="UER00171"/>
</dbReference>
<dbReference type="UniPathway" id="UPA00070">
    <property type="reaction ID" value="UER00115"/>
</dbReference>
<dbReference type="Proteomes" id="UP000000564">
    <property type="component" value="Chromosome"/>
</dbReference>
<dbReference type="GO" id="GO:0005737">
    <property type="term" value="C:cytoplasm"/>
    <property type="evidence" value="ECO:0007669"/>
    <property type="project" value="TreeGrafter"/>
</dbReference>
<dbReference type="GO" id="GO:0005524">
    <property type="term" value="F:ATP binding"/>
    <property type="evidence" value="ECO:0007669"/>
    <property type="project" value="UniProtKB-UniRule"/>
</dbReference>
<dbReference type="GO" id="GO:0004087">
    <property type="term" value="F:carbamoyl-phosphate synthase (ammonia) activity"/>
    <property type="evidence" value="ECO:0007669"/>
    <property type="project" value="RHEA"/>
</dbReference>
<dbReference type="GO" id="GO:0004088">
    <property type="term" value="F:carbamoyl-phosphate synthase (glutamine-hydrolyzing) activity"/>
    <property type="evidence" value="ECO:0007669"/>
    <property type="project" value="UniProtKB-UniRule"/>
</dbReference>
<dbReference type="GO" id="GO:0046872">
    <property type="term" value="F:metal ion binding"/>
    <property type="evidence" value="ECO:0007669"/>
    <property type="project" value="UniProtKB-KW"/>
</dbReference>
<dbReference type="GO" id="GO:0044205">
    <property type="term" value="P:'de novo' UMP biosynthetic process"/>
    <property type="evidence" value="ECO:0007669"/>
    <property type="project" value="UniProtKB-UniRule"/>
</dbReference>
<dbReference type="GO" id="GO:0006541">
    <property type="term" value="P:glutamine metabolic process"/>
    <property type="evidence" value="ECO:0007669"/>
    <property type="project" value="TreeGrafter"/>
</dbReference>
<dbReference type="GO" id="GO:0006526">
    <property type="term" value="P:L-arginine biosynthetic process"/>
    <property type="evidence" value="ECO:0007669"/>
    <property type="project" value="UniProtKB-UniRule"/>
</dbReference>
<dbReference type="CDD" id="cd01424">
    <property type="entry name" value="MGS_CPS_II"/>
    <property type="match status" value="1"/>
</dbReference>
<dbReference type="FunFam" id="1.10.1030.10:FF:000002">
    <property type="entry name" value="Carbamoyl-phosphate synthase large chain"/>
    <property type="match status" value="1"/>
</dbReference>
<dbReference type="FunFam" id="3.30.1490.20:FF:000001">
    <property type="entry name" value="Carbamoyl-phosphate synthase large chain"/>
    <property type="match status" value="1"/>
</dbReference>
<dbReference type="FunFam" id="3.30.470.20:FF:000001">
    <property type="entry name" value="Carbamoyl-phosphate synthase large chain"/>
    <property type="match status" value="1"/>
</dbReference>
<dbReference type="FunFam" id="3.30.470.20:FF:000026">
    <property type="entry name" value="Carbamoyl-phosphate synthase large chain"/>
    <property type="match status" value="1"/>
</dbReference>
<dbReference type="FunFam" id="3.40.50.20:FF:000001">
    <property type="entry name" value="Carbamoyl-phosphate synthase large chain"/>
    <property type="match status" value="2"/>
</dbReference>
<dbReference type="Gene3D" id="3.40.50.20">
    <property type="match status" value="2"/>
</dbReference>
<dbReference type="Gene3D" id="3.30.1490.20">
    <property type="entry name" value="ATP-grasp fold, A domain"/>
    <property type="match status" value="1"/>
</dbReference>
<dbReference type="Gene3D" id="3.30.470.20">
    <property type="entry name" value="ATP-grasp fold, B domain"/>
    <property type="match status" value="2"/>
</dbReference>
<dbReference type="Gene3D" id="1.10.1030.10">
    <property type="entry name" value="Carbamoyl-phosphate synthetase, large subunit oligomerisation domain"/>
    <property type="match status" value="1"/>
</dbReference>
<dbReference type="Gene3D" id="3.40.50.1380">
    <property type="entry name" value="Methylglyoxal synthase-like domain"/>
    <property type="match status" value="1"/>
</dbReference>
<dbReference type="HAMAP" id="MF_01210_A">
    <property type="entry name" value="CPSase_L_chain_A"/>
    <property type="match status" value="1"/>
</dbReference>
<dbReference type="HAMAP" id="MF_01210_B">
    <property type="entry name" value="CPSase_L_chain_B"/>
    <property type="match status" value="1"/>
</dbReference>
<dbReference type="InterPro" id="IPR011761">
    <property type="entry name" value="ATP-grasp"/>
</dbReference>
<dbReference type="InterPro" id="IPR013815">
    <property type="entry name" value="ATP_grasp_subdomain_1"/>
</dbReference>
<dbReference type="InterPro" id="IPR006275">
    <property type="entry name" value="CarbamoylP_synth_lsu"/>
</dbReference>
<dbReference type="InterPro" id="IPR005480">
    <property type="entry name" value="CarbamoylP_synth_lsu_oligo"/>
</dbReference>
<dbReference type="InterPro" id="IPR036897">
    <property type="entry name" value="CarbamoylP_synth_lsu_oligo_sf"/>
</dbReference>
<dbReference type="InterPro" id="IPR005479">
    <property type="entry name" value="CbamoylP_synth_lsu-like_ATP-bd"/>
</dbReference>
<dbReference type="InterPro" id="IPR005483">
    <property type="entry name" value="CbamoylP_synth_lsu_CPSase_dom"/>
</dbReference>
<dbReference type="InterPro" id="IPR011607">
    <property type="entry name" value="MGS-like_dom"/>
</dbReference>
<dbReference type="InterPro" id="IPR036914">
    <property type="entry name" value="MGS-like_dom_sf"/>
</dbReference>
<dbReference type="InterPro" id="IPR033937">
    <property type="entry name" value="MGS_CPS_CarB"/>
</dbReference>
<dbReference type="InterPro" id="IPR016185">
    <property type="entry name" value="PreATP-grasp_dom_sf"/>
</dbReference>
<dbReference type="NCBIfam" id="TIGR01369">
    <property type="entry name" value="CPSaseII_lrg"/>
    <property type="match status" value="1"/>
</dbReference>
<dbReference type="NCBIfam" id="NF003671">
    <property type="entry name" value="PRK05294.1"/>
    <property type="match status" value="1"/>
</dbReference>
<dbReference type="NCBIfam" id="NF009455">
    <property type="entry name" value="PRK12815.1"/>
    <property type="match status" value="1"/>
</dbReference>
<dbReference type="PANTHER" id="PTHR11405:SF53">
    <property type="entry name" value="CARBAMOYL-PHOSPHATE SYNTHASE [AMMONIA], MITOCHONDRIAL"/>
    <property type="match status" value="1"/>
</dbReference>
<dbReference type="PANTHER" id="PTHR11405">
    <property type="entry name" value="CARBAMOYLTRANSFERASE FAMILY MEMBER"/>
    <property type="match status" value="1"/>
</dbReference>
<dbReference type="Pfam" id="PF02786">
    <property type="entry name" value="CPSase_L_D2"/>
    <property type="match status" value="2"/>
</dbReference>
<dbReference type="Pfam" id="PF02787">
    <property type="entry name" value="CPSase_L_D3"/>
    <property type="match status" value="1"/>
</dbReference>
<dbReference type="Pfam" id="PF02142">
    <property type="entry name" value="MGS"/>
    <property type="match status" value="1"/>
</dbReference>
<dbReference type="PRINTS" id="PR00098">
    <property type="entry name" value="CPSASE"/>
</dbReference>
<dbReference type="SMART" id="SM01096">
    <property type="entry name" value="CPSase_L_D3"/>
    <property type="match status" value="1"/>
</dbReference>
<dbReference type="SMART" id="SM01209">
    <property type="entry name" value="GARS_A"/>
    <property type="match status" value="1"/>
</dbReference>
<dbReference type="SMART" id="SM00851">
    <property type="entry name" value="MGS"/>
    <property type="match status" value="1"/>
</dbReference>
<dbReference type="SUPFAM" id="SSF48108">
    <property type="entry name" value="Carbamoyl phosphate synthetase, large subunit connection domain"/>
    <property type="match status" value="1"/>
</dbReference>
<dbReference type="SUPFAM" id="SSF56059">
    <property type="entry name" value="Glutathione synthetase ATP-binding domain-like"/>
    <property type="match status" value="2"/>
</dbReference>
<dbReference type="SUPFAM" id="SSF52335">
    <property type="entry name" value="Methylglyoxal synthase-like"/>
    <property type="match status" value="1"/>
</dbReference>
<dbReference type="SUPFAM" id="SSF52440">
    <property type="entry name" value="PreATP-grasp domain"/>
    <property type="match status" value="2"/>
</dbReference>
<dbReference type="PROSITE" id="PS50975">
    <property type="entry name" value="ATP_GRASP"/>
    <property type="match status" value="2"/>
</dbReference>
<dbReference type="PROSITE" id="PS00866">
    <property type="entry name" value="CPSASE_1"/>
    <property type="match status" value="2"/>
</dbReference>
<dbReference type="PROSITE" id="PS00867">
    <property type="entry name" value="CPSASE_2"/>
    <property type="match status" value="2"/>
</dbReference>
<dbReference type="PROSITE" id="PS51855">
    <property type="entry name" value="MGS"/>
    <property type="match status" value="1"/>
</dbReference>
<proteinExistence type="inferred from homology"/>
<name>CARB_STRP3</name>
<evidence type="ECO:0000255" key="1">
    <source>
        <dbReference type="HAMAP-Rule" id="MF_01210"/>
    </source>
</evidence>
<evidence type="ECO:0000305" key="2"/>
<gene>
    <name evidence="1" type="primary">carB</name>
    <name type="ordered locus">SpyM3_0562</name>
</gene>
<organism>
    <name type="scientific">Streptococcus pyogenes serotype M3 (strain ATCC BAA-595 / MGAS315)</name>
    <dbReference type="NCBI Taxonomy" id="198466"/>
    <lineage>
        <taxon>Bacteria</taxon>
        <taxon>Bacillati</taxon>
        <taxon>Bacillota</taxon>
        <taxon>Bacilli</taxon>
        <taxon>Lactobacillales</taxon>
        <taxon>Streptococcaceae</taxon>
        <taxon>Streptococcus</taxon>
    </lineage>
</organism>
<comment type="function">
    <text evidence="1">Large subunit of the glutamine-dependent carbamoyl phosphate synthetase (CPSase). CPSase catalyzes the formation of carbamoyl phosphate from the ammonia moiety of glutamine, carbonate, and phosphate donated by ATP, constituting the first step of 2 biosynthetic pathways, one leading to arginine and/or urea and the other to pyrimidine nucleotides. The large subunit (synthetase) binds the substrates ammonia (free or transferred from glutamine from the small subunit), hydrogencarbonate and ATP and carries out an ATP-coupled ligase reaction, activating hydrogencarbonate by forming carboxy phosphate which reacts with ammonia to form carbamoyl phosphate.</text>
</comment>
<comment type="catalytic activity">
    <reaction evidence="1">
        <text>hydrogencarbonate + L-glutamine + 2 ATP + H2O = carbamoyl phosphate + L-glutamate + 2 ADP + phosphate + 2 H(+)</text>
        <dbReference type="Rhea" id="RHEA:18633"/>
        <dbReference type="ChEBI" id="CHEBI:15377"/>
        <dbReference type="ChEBI" id="CHEBI:15378"/>
        <dbReference type="ChEBI" id="CHEBI:17544"/>
        <dbReference type="ChEBI" id="CHEBI:29985"/>
        <dbReference type="ChEBI" id="CHEBI:30616"/>
        <dbReference type="ChEBI" id="CHEBI:43474"/>
        <dbReference type="ChEBI" id="CHEBI:58228"/>
        <dbReference type="ChEBI" id="CHEBI:58359"/>
        <dbReference type="ChEBI" id="CHEBI:456216"/>
        <dbReference type="EC" id="6.3.5.5"/>
    </reaction>
</comment>
<comment type="catalytic activity">
    <molecule>Carbamoyl phosphate synthase large chain</molecule>
    <reaction evidence="1">
        <text>hydrogencarbonate + NH4(+) + 2 ATP = carbamoyl phosphate + 2 ADP + phosphate + 2 H(+)</text>
        <dbReference type="Rhea" id="RHEA:18029"/>
        <dbReference type="ChEBI" id="CHEBI:15378"/>
        <dbReference type="ChEBI" id="CHEBI:17544"/>
        <dbReference type="ChEBI" id="CHEBI:28938"/>
        <dbReference type="ChEBI" id="CHEBI:30616"/>
        <dbReference type="ChEBI" id="CHEBI:43474"/>
        <dbReference type="ChEBI" id="CHEBI:58228"/>
        <dbReference type="ChEBI" id="CHEBI:456216"/>
        <dbReference type="EC" id="6.3.4.16"/>
    </reaction>
</comment>
<comment type="cofactor">
    <cofactor evidence="1">
        <name>Mg(2+)</name>
        <dbReference type="ChEBI" id="CHEBI:18420"/>
    </cofactor>
    <cofactor evidence="1">
        <name>Mn(2+)</name>
        <dbReference type="ChEBI" id="CHEBI:29035"/>
    </cofactor>
    <text evidence="1">Binds 4 Mg(2+) or Mn(2+) ions per subunit.</text>
</comment>
<comment type="pathway">
    <text evidence="1">Amino-acid biosynthesis; L-arginine biosynthesis; carbamoyl phosphate from bicarbonate: step 1/1.</text>
</comment>
<comment type="pathway">
    <text evidence="1">Pyrimidine metabolism; UMP biosynthesis via de novo pathway; (S)-dihydroorotate from bicarbonate: step 1/3.</text>
</comment>
<comment type="subunit">
    <text evidence="1">Composed of two chains; the small (or glutamine) chain promotes the hydrolysis of glutamine to ammonia, which is used by the large (or ammonia) chain to synthesize carbamoyl phosphate. Tetramer of heterodimers (alpha,beta)4.</text>
</comment>
<comment type="domain">
    <text evidence="1">The large subunit is composed of 2 ATP-grasp domains that are involved in binding the 2 ATP molecules needed for carbamoyl phosphate synthesis. The N-terminal ATP-grasp domain (referred to as the carboxyphosphate synthetic component) catalyzes the ATP-dependent phosphorylation of hydrogencarbonate to carboxyphosphate and the subsequent nucleophilic attack by ammonia to form a carbamate intermediate. The C-terminal ATP-grasp domain (referred to as the carbamoyl phosphate synthetic component) then catalyzes the phosphorylation of carbamate with the second ATP to form the end product carbamoyl phosphate. The reactive and unstable enzyme intermediates are sequentially channeled from one active site to the next through the interior of the protein over a distance of at least 96 A.</text>
</comment>
<comment type="similarity">
    <text evidence="1">Belongs to the CarB family.</text>
</comment>
<comment type="sequence caution" evidence="2">
    <conflict type="erroneous initiation">
        <sequence resource="EMBL-CDS" id="AAM79169"/>
    </conflict>
</comment>